<dbReference type="EMBL" id="AB030201">
    <property type="protein sequence ID" value="BAA92764.1"/>
    <property type="molecule type" value="mRNA"/>
</dbReference>
<dbReference type="EMBL" id="BC010787">
    <property type="protein sequence ID" value="AAH10787.1"/>
    <property type="molecule type" value="mRNA"/>
</dbReference>
<dbReference type="CCDS" id="CCDS22913.1"/>
<dbReference type="RefSeq" id="NP_001240796.2">
    <property type="nucleotide sequence ID" value="NM_001253867.2"/>
</dbReference>
<dbReference type="RefSeq" id="NP_001240797.1">
    <property type="nucleotide sequence ID" value="NM_001253868.2"/>
</dbReference>
<dbReference type="RefSeq" id="NP_001240798.1">
    <property type="nucleotide sequence ID" value="NM_001253869.2"/>
</dbReference>
<dbReference type="RefSeq" id="NP_001240799.1">
    <property type="nucleotide sequence ID" value="NM_001253870.2"/>
</dbReference>
<dbReference type="RefSeq" id="NP_848692.2">
    <property type="nucleotide sequence ID" value="NM_178577.5"/>
</dbReference>
<dbReference type="FunCoup" id="Q91XE8">
    <property type="interactions" value="578"/>
</dbReference>
<dbReference type="STRING" id="10090.ENSMUSP00000158874"/>
<dbReference type="GlyGen" id="Q91XE8">
    <property type="glycosylation" value="1 site, 1 O-linked glycan (1 site)"/>
</dbReference>
<dbReference type="iPTMnet" id="Q91XE8"/>
<dbReference type="PhosphoSitePlus" id="Q91XE8"/>
<dbReference type="SwissPalm" id="Q91XE8"/>
<dbReference type="jPOST" id="Q91XE8"/>
<dbReference type="PaxDb" id="10090-ENSMUSP00000137301"/>
<dbReference type="PeptideAtlas" id="Q91XE8"/>
<dbReference type="ProteomicsDB" id="258912"/>
<dbReference type="Pumba" id="Q91XE8"/>
<dbReference type="Antibodypedia" id="52091">
    <property type="antibodies" value="108 antibodies from 23 providers"/>
</dbReference>
<dbReference type="DNASU" id="235043"/>
<dbReference type="Ensembl" id="ENSMUST00000046831.11">
    <property type="protein sequence ID" value="ENSMUSP00000048832.10"/>
    <property type="gene ID" value="ENSMUSG00000040883.19"/>
</dbReference>
<dbReference type="Ensembl" id="ENSMUST00000213698.2">
    <property type="protein sequence ID" value="ENSMUSP00000150045.2"/>
    <property type="gene ID" value="ENSMUSG00000040883.19"/>
</dbReference>
<dbReference type="Ensembl" id="ENSMUST00000238930.2">
    <property type="protein sequence ID" value="ENSMUSP00000158874.2"/>
    <property type="gene ID" value="ENSMUSG00000040883.19"/>
</dbReference>
<dbReference type="GeneID" id="235043"/>
<dbReference type="KEGG" id="mmu:235043"/>
<dbReference type="UCSC" id="uc009omw.2">
    <property type="organism name" value="mouse"/>
</dbReference>
<dbReference type="AGR" id="MGI:3045495"/>
<dbReference type="CTD" id="374882"/>
<dbReference type="MGI" id="MGI:3045495">
    <property type="gene designation" value="Tmem205"/>
</dbReference>
<dbReference type="VEuPathDB" id="HostDB:ENSMUSG00000040883"/>
<dbReference type="eggNOG" id="KOG2886">
    <property type="taxonomic scope" value="Eukaryota"/>
</dbReference>
<dbReference type="GeneTree" id="ENSGT00390000016298"/>
<dbReference type="HOGENOM" id="CLU_094297_1_1_1"/>
<dbReference type="InParanoid" id="Q91XE8"/>
<dbReference type="OMA" id="FQMRAVE"/>
<dbReference type="OrthoDB" id="1641132at2759"/>
<dbReference type="PhylomeDB" id="Q91XE8"/>
<dbReference type="TreeFam" id="TF323838"/>
<dbReference type="BioGRID-ORCS" id="235043">
    <property type="hits" value="2 hits in 79 CRISPR screens"/>
</dbReference>
<dbReference type="PRO" id="PR:Q91XE8"/>
<dbReference type="Proteomes" id="UP000000589">
    <property type="component" value="Chromosome 9"/>
</dbReference>
<dbReference type="RNAct" id="Q91XE8">
    <property type="molecule type" value="protein"/>
</dbReference>
<dbReference type="Bgee" id="ENSMUSG00000040883">
    <property type="expression patterns" value="Expressed in left lobe of liver and 226 other cell types or tissues"/>
</dbReference>
<dbReference type="ExpressionAtlas" id="Q91XE8">
    <property type="expression patterns" value="baseline and differential"/>
</dbReference>
<dbReference type="GO" id="GO:0016020">
    <property type="term" value="C:membrane"/>
    <property type="evidence" value="ECO:0007669"/>
    <property type="project" value="UniProtKB-SubCell"/>
</dbReference>
<dbReference type="InterPro" id="IPR042623">
    <property type="entry name" value="TMEM205"/>
</dbReference>
<dbReference type="InterPro" id="IPR025423">
    <property type="entry name" value="TMEM205-like"/>
</dbReference>
<dbReference type="PANTHER" id="PTHR46916">
    <property type="entry name" value="TRANSMEMBRANE PROTEIN 205"/>
    <property type="match status" value="1"/>
</dbReference>
<dbReference type="PANTHER" id="PTHR46916:SF2">
    <property type="entry name" value="TRANSMEMBRANE PROTEIN 205"/>
    <property type="match status" value="1"/>
</dbReference>
<dbReference type="Pfam" id="PF13664">
    <property type="entry name" value="DUF4149"/>
    <property type="match status" value="1"/>
</dbReference>
<organism>
    <name type="scientific">Mus musculus</name>
    <name type="common">Mouse</name>
    <dbReference type="NCBI Taxonomy" id="10090"/>
    <lineage>
        <taxon>Eukaryota</taxon>
        <taxon>Metazoa</taxon>
        <taxon>Chordata</taxon>
        <taxon>Craniata</taxon>
        <taxon>Vertebrata</taxon>
        <taxon>Euteleostomi</taxon>
        <taxon>Mammalia</taxon>
        <taxon>Eutheria</taxon>
        <taxon>Euarchontoglires</taxon>
        <taxon>Glires</taxon>
        <taxon>Rodentia</taxon>
        <taxon>Myomorpha</taxon>
        <taxon>Muroidea</taxon>
        <taxon>Muridae</taxon>
        <taxon>Murinae</taxon>
        <taxon>Mus</taxon>
        <taxon>Mus</taxon>
    </lineage>
</organism>
<accession>Q91XE8</accession>
<accession>Q9JME6</accession>
<name>TM205_MOUSE</name>
<protein>
    <recommendedName>
        <fullName>Transmembrane protein 205</fullName>
    </recommendedName>
</protein>
<feature type="chain" id="PRO_0000317502" description="Transmembrane protein 205">
    <location>
        <begin position="1"/>
        <end position="189"/>
    </location>
</feature>
<feature type="transmembrane region" description="Helical" evidence="1">
    <location>
        <begin position="18"/>
        <end position="38"/>
    </location>
</feature>
<feature type="transmembrane region" description="Helical" evidence="1">
    <location>
        <begin position="53"/>
        <end position="73"/>
    </location>
</feature>
<feature type="transmembrane region" description="Helical" evidence="1">
    <location>
        <begin position="81"/>
        <end position="101"/>
    </location>
</feature>
<feature type="transmembrane region" description="Helical" evidence="1">
    <location>
        <begin position="166"/>
        <end position="186"/>
    </location>
</feature>
<feature type="sequence conflict" description="In Ref. 1; BAA92764." evidence="2" ref="1">
    <original>L</original>
    <variation>F</variation>
    <location>
        <position position="37"/>
    </location>
</feature>
<gene>
    <name type="primary">Tmem205</name>
</gene>
<proteinExistence type="evidence at protein level"/>
<sequence length="189" mass="21180">MEKGEDPGSLIKVIHLLVLSGAWGMQVWVTFISGFLLFRSLPRHTFGLVQSKVFPVYFHVSLGCAFINLCILAPQRAWIHLTLWEVSQLSLLLLSLTLATINARWLEARTTAVMRALQSIEKERGLGTEVPGNFQGPDPYRQLRDKDPKYSALRRKFYHYHGLSSLCNLGCLLSNGLCLVGLALGLRSL</sequence>
<keyword id="KW-0472">Membrane</keyword>
<keyword id="KW-1185">Reference proteome</keyword>
<keyword id="KW-0812">Transmembrane</keyword>
<keyword id="KW-1133">Transmembrane helix</keyword>
<reference key="1">
    <citation type="journal article" date="2000" name="Biochem. Biophys. Res. Commun.">
        <title>Growth suppression of Escherichia coli by induction of expression of mammalian genes with transmembrane or ATPase domains.</title>
        <authorList>
            <person name="Inoue S."/>
            <person name="Sano H."/>
            <person name="Ohta M."/>
        </authorList>
    </citation>
    <scope>NUCLEOTIDE SEQUENCE [MRNA]</scope>
    <source>
        <tissue>Brain</tissue>
    </source>
</reference>
<reference key="2">
    <citation type="journal article" date="2004" name="Genome Res.">
        <title>The status, quality, and expansion of the NIH full-length cDNA project: the Mammalian Gene Collection (MGC).</title>
        <authorList>
            <consortium name="The MGC Project Team"/>
        </authorList>
    </citation>
    <scope>NUCLEOTIDE SEQUENCE [LARGE SCALE MRNA]</scope>
    <source>
        <strain>FVB/N</strain>
        <tissue>Liver</tissue>
    </source>
</reference>
<reference key="3">
    <citation type="journal article" date="2010" name="Cell">
        <title>A tissue-specific atlas of mouse protein phosphorylation and expression.</title>
        <authorList>
            <person name="Huttlin E.L."/>
            <person name="Jedrychowski M.P."/>
            <person name="Elias J.E."/>
            <person name="Goswami T."/>
            <person name="Rad R."/>
            <person name="Beausoleil S.A."/>
            <person name="Villen J."/>
            <person name="Haas W."/>
            <person name="Sowa M.E."/>
            <person name="Gygi S.P."/>
        </authorList>
    </citation>
    <scope>IDENTIFICATION BY MASS SPECTROMETRY [LARGE SCALE ANALYSIS]</scope>
    <source>
        <tissue>Brown adipose tissue</tissue>
        <tissue>Kidney</tissue>
        <tissue>Liver</tissue>
        <tissue>Lung</tissue>
        <tissue>Pancreas</tissue>
        <tissue>Spleen</tissue>
        <tissue>Testis</tissue>
    </source>
</reference>
<comment type="subcellular location">
    <subcellularLocation>
        <location evidence="2">Membrane</location>
        <topology evidence="2">Multi-pass membrane protein</topology>
    </subcellularLocation>
</comment>
<comment type="similarity">
    <text evidence="2">Belongs to the TMEM205 family.</text>
</comment>
<evidence type="ECO:0000255" key="1"/>
<evidence type="ECO:0000305" key="2"/>